<dbReference type="EMBL" id="AP009180">
    <property type="protein sequence ID" value="BAF35126.1"/>
    <property type="molecule type" value="Genomic_DNA"/>
</dbReference>
<dbReference type="KEGG" id="crp:CRP_095"/>
<dbReference type="HOGENOM" id="CLU_218274_0_0_6"/>
<dbReference type="Proteomes" id="UP000000777">
    <property type="component" value="Chromosome"/>
</dbReference>
<dbReference type="GO" id="GO:0015934">
    <property type="term" value="C:large ribosomal subunit"/>
    <property type="evidence" value="ECO:0007669"/>
    <property type="project" value="InterPro"/>
</dbReference>
<dbReference type="GO" id="GO:0003735">
    <property type="term" value="F:structural constituent of ribosome"/>
    <property type="evidence" value="ECO:0007669"/>
    <property type="project" value="InterPro"/>
</dbReference>
<dbReference type="GO" id="GO:0006412">
    <property type="term" value="P:translation"/>
    <property type="evidence" value="ECO:0007669"/>
    <property type="project" value="InterPro"/>
</dbReference>
<dbReference type="InterPro" id="IPR002677">
    <property type="entry name" value="Ribosomal_bL32"/>
</dbReference>
<dbReference type="NCBIfam" id="TIGR01031">
    <property type="entry name" value="rpmF_bact"/>
    <property type="match status" value="1"/>
</dbReference>
<gene>
    <name type="primary">rpmF</name>
    <name type="ordered locus">CRP_095</name>
</gene>
<sequence length="43" mass="5212">MAVPKQKKSKSKSRFKKKNFLLKNKIIAKNQYNNYFIKHRCLV</sequence>
<reference key="1">
    <citation type="journal article" date="2006" name="Science">
        <title>The 160-kilobase genome of the bacterial endosymbiont Carsonella.</title>
        <authorList>
            <person name="Nakabachi A."/>
            <person name="Yamashita A."/>
            <person name="Toh H."/>
            <person name="Ishikawa H."/>
            <person name="Dunbar H.E."/>
            <person name="Moran N.A."/>
            <person name="Hattori M."/>
        </authorList>
    </citation>
    <scope>NUCLEOTIDE SEQUENCE [LARGE SCALE GENOMIC DNA]</scope>
    <source>
        <strain>PV</strain>
    </source>
</reference>
<proteinExistence type="inferred from homology"/>
<evidence type="ECO:0000305" key="1"/>
<protein>
    <recommendedName>
        <fullName evidence="1">Large ribosomal subunit protein bL32</fullName>
    </recommendedName>
    <alternativeName>
        <fullName>50S ribosomal protein L32</fullName>
    </alternativeName>
</protein>
<accession>Q05FP5</accession>
<comment type="similarity">
    <text evidence="1">Belongs to the bacterial ribosomal protein bL32 family.</text>
</comment>
<organism>
    <name type="scientific">Carsonella ruddii (strain PV)</name>
    <dbReference type="NCBI Taxonomy" id="387662"/>
    <lineage>
        <taxon>Bacteria</taxon>
        <taxon>Pseudomonadati</taxon>
        <taxon>Pseudomonadota</taxon>
        <taxon>Gammaproteobacteria</taxon>
        <taxon>Oceanospirillales</taxon>
        <taxon>Halomonadaceae</taxon>
        <taxon>Zymobacter group</taxon>
        <taxon>Candidatus Carsonella</taxon>
    </lineage>
</organism>
<name>RL32_CARRP</name>
<feature type="chain" id="PRO_0000296443" description="Large ribosomal subunit protein bL32">
    <location>
        <begin position="1"/>
        <end position="43"/>
    </location>
</feature>
<keyword id="KW-0687">Ribonucleoprotein</keyword>
<keyword id="KW-0689">Ribosomal protein</keyword>